<proteinExistence type="inferred from homology"/>
<dbReference type="EC" id="5.6.1.7" evidence="1"/>
<dbReference type="EMBL" id="CP000569">
    <property type="protein sequence ID" value="ABN74106.1"/>
    <property type="molecule type" value="Genomic_DNA"/>
</dbReference>
<dbReference type="RefSeq" id="WP_009874825.1">
    <property type="nucleotide sequence ID" value="NC_009053.1"/>
</dbReference>
<dbReference type="SMR" id="A3N120"/>
<dbReference type="STRING" id="416269.APL_1012"/>
<dbReference type="EnsemblBacteria" id="ABN74106">
    <property type="protein sequence ID" value="ABN74106"/>
    <property type="gene ID" value="APL_1012"/>
</dbReference>
<dbReference type="KEGG" id="apl:APL_1012"/>
<dbReference type="PATRIC" id="fig|416269.6.peg.1059"/>
<dbReference type="eggNOG" id="COG0459">
    <property type="taxonomic scope" value="Bacteria"/>
</dbReference>
<dbReference type="HOGENOM" id="CLU_016503_3_0_6"/>
<dbReference type="Proteomes" id="UP000001432">
    <property type="component" value="Chromosome"/>
</dbReference>
<dbReference type="GO" id="GO:0005737">
    <property type="term" value="C:cytoplasm"/>
    <property type="evidence" value="ECO:0007669"/>
    <property type="project" value="UniProtKB-SubCell"/>
</dbReference>
<dbReference type="GO" id="GO:0005524">
    <property type="term" value="F:ATP binding"/>
    <property type="evidence" value="ECO:0007669"/>
    <property type="project" value="UniProtKB-UniRule"/>
</dbReference>
<dbReference type="GO" id="GO:0140662">
    <property type="term" value="F:ATP-dependent protein folding chaperone"/>
    <property type="evidence" value="ECO:0007669"/>
    <property type="project" value="InterPro"/>
</dbReference>
<dbReference type="GO" id="GO:0016853">
    <property type="term" value="F:isomerase activity"/>
    <property type="evidence" value="ECO:0007669"/>
    <property type="project" value="UniProtKB-KW"/>
</dbReference>
<dbReference type="GO" id="GO:0051082">
    <property type="term" value="F:unfolded protein binding"/>
    <property type="evidence" value="ECO:0007669"/>
    <property type="project" value="UniProtKB-UniRule"/>
</dbReference>
<dbReference type="GO" id="GO:0042026">
    <property type="term" value="P:protein refolding"/>
    <property type="evidence" value="ECO:0007669"/>
    <property type="project" value="UniProtKB-UniRule"/>
</dbReference>
<dbReference type="CDD" id="cd03344">
    <property type="entry name" value="GroEL"/>
    <property type="match status" value="1"/>
</dbReference>
<dbReference type="FunFam" id="1.10.560.10:FF:000001">
    <property type="entry name" value="60 kDa chaperonin"/>
    <property type="match status" value="1"/>
</dbReference>
<dbReference type="FunFam" id="3.50.7.10:FF:000001">
    <property type="entry name" value="60 kDa chaperonin"/>
    <property type="match status" value="1"/>
</dbReference>
<dbReference type="Gene3D" id="3.50.7.10">
    <property type="entry name" value="GroEL"/>
    <property type="match status" value="1"/>
</dbReference>
<dbReference type="Gene3D" id="1.10.560.10">
    <property type="entry name" value="GroEL-like equatorial domain"/>
    <property type="match status" value="1"/>
</dbReference>
<dbReference type="Gene3D" id="3.30.260.10">
    <property type="entry name" value="TCP-1-like chaperonin intermediate domain"/>
    <property type="match status" value="1"/>
</dbReference>
<dbReference type="HAMAP" id="MF_00600">
    <property type="entry name" value="CH60"/>
    <property type="match status" value="1"/>
</dbReference>
<dbReference type="InterPro" id="IPR018370">
    <property type="entry name" value="Chaperonin_Cpn60_CS"/>
</dbReference>
<dbReference type="InterPro" id="IPR001844">
    <property type="entry name" value="Cpn60/GroEL"/>
</dbReference>
<dbReference type="InterPro" id="IPR002423">
    <property type="entry name" value="Cpn60/GroEL/TCP-1"/>
</dbReference>
<dbReference type="InterPro" id="IPR027409">
    <property type="entry name" value="GroEL-like_apical_dom_sf"/>
</dbReference>
<dbReference type="InterPro" id="IPR027413">
    <property type="entry name" value="GROEL-like_equatorial_sf"/>
</dbReference>
<dbReference type="InterPro" id="IPR027410">
    <property type="entry name" value="TCP-1-like_intermed_sf"/>
</dbReference>
<dbReference type="NCBIfam" id="TIGR02348">
    <property type="entry name" value="GroEL"/>
    <property type="match status" value="1"/>
</dbReference>
<dbReference type="NCBIfam" id="NF000592">
    <property type="entry name" value="PRK00013.1"/>
    <property type="match status" value="1"/>
</dbReference>
<dbReference type="NCBIfam" id="NF009487">
    <property type="entry name" value="PRK12849.1"/>
    <property type="match status" value="1"/>
</dbReference>
<dbReference type="NCBIfam" id="NF009488">
    <property type="entry name" value="PRK12850.1"/>
    <property type="match status" value="1"/>
</dbReference>
<dbReference type="NCBIfam" id="NF009489">
    <property type="entry name" value="PRK12851.1"/>
    <property type="match status" value="1"/>
</dbReference>
<dbReference type="PANTHER" id="PTHR45633">
    <property type="entry name" value="60 KDA HEAT SHOCK PROTEIN, MITOCHONDRIAL"/>
    <property type="match status" value="1"/>
</dbReference>
<dbReference type="Pfam" id="PF00118">
    <property type="entry name" value="Cpn60_TCP1"/>
    <property type="match status" value="1"/>
</dbReference>
<dbReference type="PRINTS" id="PR00298">
    <property type="entry name" value="CHAPERONIN60"/>
</dbReference>
<dbReference type="SUPFAM" id="SSF52029">
    <property type="entry name" value="GroEL apical domain-like"/>
    <property type="match status" value="1"/>
</dbReference>
<dbReference type="SUPFAM" id="SSF48592">
    <property type="entry name" value="GroEL equatorial domain-like"/>
    <property type="match status" value="2"/>
</dbReference>
<dbReference type="PROSITE" id="PS00296">
    <property type="entry name" value="CHAPERONINS_CPN60"/>
    <property type="match status" value="1"/>
</dbReference>
<feature type="chain" id="PRO_1000025747" description="Chaperonin GroEL">
    <location>
        <begin position="1"/>
        <end position="547"/>
    </location>
</feature>
<feature type="binding site" evidence="1">
    <location>
        <begin position="30"/>
        <end position="33"/>
    </location>
    <ligand>
        <name>ATP</name>
        <dbReference type="ChEBI" id="CHEBI:30616"/>
    </ligand>
</feature>
<feature type="binding site" evidence="1">
    <location>
        <position position="51"/>
    </location>
    <ligand>
        <name>ATP</name>
        <dbReference type="ChEBI" id="CHEBI:30616"/>
    </ligand>
</feature>
<feature type="binding site" evidence="1">
    <location>
        <begin position="87"/>
        <end position="91"/>
    </location>
    <ligand>
        <name>ATP</name>
        <dbReference type="ChEBI" id="CHEBI:30616"/>
    </ligand>
</feature>
<feature type="binding site" evidence="1">
    <location>
        <position position="415"/>
    </location>
    <ligand>
        <name>ATP</name>
        <dbReference type="ChEBI" id="CHEBI:30616"/>
    </ligand>
</feature>
<feature type="binding site" evidence="1">
    <location>
        <position position="496"/>
    </location>
    <ligand>
        <name>ATP</name>
        <dbReference type="ChEBI" id="CHEBI:30616"/>
    </ligand>
</feature>
<reference key="1">
    <citation type="journal article" date="2008" name="J. Bacteriol.">
        <title>The complete genome sequence of Actinobacillus pleuropneumoniae L20 (serotype 5b).</title>
        <authorList>
            <person name="Foote S.J."/>
            <person name="Bosse J.T."/>
            <person name="Bouevitch A.B."/>
            <person name="Langford P.R."/>
            <person name="Young N.M."/>
            <person name="Nash J.H.E."/>
        </authorList>
    </citation>
    <scope>NUCLEOTIDE SEQUENCE [LARGE SCALE GENOMIC DNA]</scope>
    <source>
        <strain>L20</strain>
    </source>
</reference>
<keyword id="KW-0067">ATP-binding</keyword>
<keyword id="KW-0143">Chaperone</keyword>
<keyword id="KW-0963">Cytoplasm</keyword>
<keyword id="KW-0413">Isomerase</keyword>
<keyword id="KW-0547">Nucleotide-binding</keyword>
<keyword id="KW-1185">Reference proteome</keyword>
<protein>
    <recommendedName>
        <fullName evidence="1">Chaperonin GroEL</fullName>
        <ecNumber evidence="1">5.6.1.7</ecNumber>
    </recommendedName>
    <alternativeName>
        <fullName evidence="1">60 kDa chaperonin</fullName>
    </alternativeName>
    <alternativeName>
        <fullName evidence="1">Chaperonin-60</fullName>
        <shortName evidence="1">Cpn60</shortName>
    </alternativeName>
</protein>
<gene>
    <name evidence="1" type="primary">groEL</name>
    <name evidence="1" type="synonym">groL</name>
    <name type="ordered locus">APL_1012</name>
</gene>
<accession>A3N120</accession>
<name>CH60_ACTP2</name>
<sequence length="547" mass="57646">MAAKDVKFGNDARVKMLKGVNVLADAVKVTLGPKGRNVVLDKAYGAPTITKDGVSVAREIELEDKFENMGAQMVKEVASKANDAAGDGTTTATVLAQAIVNEGLKAVAAGMNPMDLKRGIDKAVVAVVEELKAISKPCETSKEIEQVGTISANSDETVGKLIAQAMEKVGKEGVITVEDGTGLDDALDVVEGMQFDRGYLSPYFINKPEAGTVELENPYIILVDKKISNIREILPVLEAVAKAGKPLLIVAEDIEGEALATLVVNTMRGIVKVAAVKAPGFGDRRKAMLQDIAILTAGTVISEEIGMELEKATLEELGQAKRVVITKDNTTIIDGIGDEAQIKARVAQIRQQIEDSTSDYDKEKLQERVAKLACGVAVIKVGAATEVAMKEKKDRVDDALHATRAAVEEGIVPGGGVALVRAASKVAATLTGDNEEQNVGIKLALRAMEAPLRQIVTNAGEEASVVARNVKDGNGNYGYNAGTEQYGDMLEMGILDPTKVTRSALQFAASIAGLMITTECMITDLPKEEKLDPAAAMGGMGGMGGMI</sequence>
<organism>
    <name type="scientific">Actinobacillus pleuropneumoniae serotype 5b (strain L20)</name>
    <dbReference type="NCBI Taxonomy" id="416269"/>
    <lineage>
        <taxon>Bacteria</taxon>
        <taxon>Pseudomonadati</taxon>
        <taxon>Pseudomonadota</taxon>
        <taxon>Gammaproteobacteria</taxon>
        <taxon>Pasteurellales</taxon>
        <taxon>Pasteurellaceae</taxon>
        <taxon>Actinobacillus</taxon>
    </lineage>
</organism>
<evidence type="ECO:0000255" key="1">
    <source>
        <dbReference type="HAMAP-Rule" id="MF_00600"/>
    </source>
</evidence>
<comment type="function">
    <text evidence="1">Together with its co-chaperonin GroES, plays an essential role in assisting protein folding. The GroEL-GroES system forms a nano-cage that allows encapsulation of the non-native substrate proteins and provides a physical environment optimized to promote and accelerate protein folding.</text>
</comment>
<comment type="catalytic activity">
    <reaction evidence="1">
        <text>ATP + H2O + a folded polypeptide = ADP + phosphate + an unfolded polypeptide.</text>
        <dbReference type="EC" id="5.6.1.7"/>
    </reaction>
</comment>
<comment type="subunit">
    <text evidence="1">Forms a cylinder of 14 subunits composed of two heptameric rings stacked back-to-back. Interacts with the co-chaperonin GroES.</text>
</comment>
<comment type="subcellular location">
    <subcellularLocation>
        <location evidence="1">Cytoplasm</location>
    </subcellularLocation>
</comment>
<comment type="similarity">
    <text evidence="1">Belongs to the chaperonin (HSP60) family.</text>
</comment>